<keyword id="KW-0343">GTPase activation</keyword>
<keyword id="KW-0344">Guanine-nucleotide releasing factor</keyword>
<keyword id="KW-0964">Secreted</keyword>
<keyword id="KW-0843">Virulence</keyword>
<name>BOPE_BURTA</name>
<sequence length="261" mass="28593">MTYNPRIGGFTHVKQASFDVHVKRSEARPRTSFAQQIKRIFSKIGETLGQLFRHRAPDGAPGRVKLQGVRYVGSYRPTGDARQAIRHFVDEAVKQVAHARTPEIRQDAEFGRQVYEATLCAIFSEAKDRFCMDPATRAGNVRPAFIAALGDAARATGLPGADKQGVFTPSGAGTNPLYTEIRLRADTLMGAELAARPEYRELQSYARQQAIDLVANALPGERSNTLAEFRQTVQTLEATYRRAAQDASRDEKGAANAADGA</sequence>
<organism>
    <name type="scientific">Burkholderia thailandensis (strain ATCC 700388 / DSM 13276 / CCUG 48851 / CIP 106301 / E264)</name>
    <dbReference type="NCBI Taxonomy" id="271848"/>
    <lineage>
        <taxon>Bacteria</taxon>
        <taxon>Pseudomonadati</taxon>
        <taxon>Pseudomonadota</taxon>
        <taxon>Betaproteobacteria</taxon>
        <taxon>Burkholderiales</taxon>
        <taxon>Burkholderiaceae</taxon>
        <taxon>Burkholderia</taxon>
        <taxon>pseudomallei group</taxon>
    </lineage>
</organism>
<proteinExistence type="inferred from homology"/>
<dbReference type="EMBL" id="CP000085">
    <property type="protein sequence ID" value="ABC36199.1"/>
    <property type="molecule type" value="Genomic_DNA"/>
</dbReference>
<dbReference type="RefSeq" id="WP_009896161.1">
    <property type="nucleotide sequence ID" value="NZ_CP008786.1"/>
</dbReference>
<dbReference type="SMR" id="Q2T704"/>
<dbReference type="GeneID" id="45118325"/>
<dbReference type="KEGG" id="bte:BTH_II0848"/>
<dbReference type="HOGENOM" id="CLU_1064256_0_0_4"/>
<dbReference type="Proteomes" id="UP000001930">
    <property type="component" value="Chromosome II"/>
</dbReference>
<dbReference type="GO" id="GO:0005576">
    <property type="term" value="C:extracellular region"/>
    <property type="evidence" value="ECO:0007669"/>
    <property type="project" value="UniProtKB-SubCell"/>
</dbReference>
<dbReference type="GO" id="GO:0005096">
    <property type="term" value="F:GTPase activator activity"/>
    <property type="evidence" value="ECO:0007669"/>
    <property type="project" value="UniProtKB-KW"/>
</dbReference>
<dbReference type="GO" id="GO:0005085">
    <property type="term" value="F:guanyl-nucleotide exchange factor activity"/>
    <property type="evidence" value="ECO:0007669"/>
    <property type="project" value="UniProtKB-KW"/>
</dbReference>
<dbReference type="GO" id="GO:0030036">
    <property type="term" value="P:actin cytoskeleton organization"/>
    <property type="evidence" value="ECO:0007669"/>
    <property type="project" value="InterPro"/>
</dbReference>
<dbReference type="Gene3D" id="1.10.4120.10">
    <property type="entry name" value="SopE-like, GEF domain"/>
    <property type="match status" value="1"/>
</dbReference>
<dbReference type="InterPro" id="IPR005414">
    <property type="entry name" value="SopE"/>
</dbReference>
<dbReference type="InterPro" id="IPR035949">
    <property type="entry name" value="SopE-like_GEF_dom_sf"/>
</dbReference>
<dbReference type="InterPro" id="IPR016019">
    <property type="entry name" value="SopE_GEF_dom"/>
</dbReference>
<dbReference type="NCBIfam" id="NF011808">
    <property type="entry name" value="PRK15278.1"/>
    <property type="match status" value="1"/>
</dbReference>
<dbReference type="Pfam" id="PF07487">
    <property type="entry name" value="SopE_GEF"/>
    <property type="match status" value="1"/>
</dbReference>
<dbReference type="PIRSF" id="PIRSF034781">
    <property type="entry name" value="SecIII_sopE"/>
    <property type="match status" value="1"/>
</dbReference>
<dbReference type="PRINTS" id="PR01593">
    <property type="entry name" value="SOPEPROTEIN"/>
</dbReference>
<dbReference type="SUPFAM" id="SSF81832">
    <property type="entry name" value="SopE-like GEF domain"/>
    <property type="match status" value="1"/>
</dbReference>
<gene>
    <name type="primary">bopE</name>
    <name type="ordered locus">BTH_II0848</name>
</gene>
<accession>Q2T704</accession>
<protein>
    <recommendedName>
        <fullName>Guanine nucleotide exchange factor BopE</fullName>
    </recommendedName>
    <alternativeName>
        <fullName>Effector protein BopE</fullName>
    </alternativeName>
</protein>
<evidence type="ECO:0000250" key="1"/>
<evidence type="ECO:0000256" key="2">
    <source>
        <dbReference type="SAM" id="MobiDB-lite"/>
    </source>
</evidence>
<evidence type="ECO:0000305" key="3"/>
<reference key="1">
    <citation type="journal article" date="2005" name="BMC Genomics">
        <title>Bacterial genome adaptation to niches: divergence of the potential virulence genes in three Burkholderia species of different survival strategies.</title>
        <authorList>
            <person name="Kim H.S."/>
            <person name="Schell M.A."/>
            <person name="Yu Y."/>
            <person name="Ulrich R.L."/>
            <person name="Sarria S.H."/>
            <person name="Nierman W.C."/>
            <person name="DeShazer D."/>
        </authorList>
    </citation>
    <scope>NUCLEOTIDE SEQUENCE [LARGE SCALE GENOMIC DNA]</scope>
    <source>
        <strain>ATCC 700388 / DSM 13276 / CCUG 48851 / CIP 106301 / E264</strain>
    </source>
</reference>
<feature type="chain" id="PRO_0000344034" description="Guanine nucleotide exchange factor BopE">
    <location>
        <begin position="1"/>
        <end position="261"/>
    </location>
</feature>
<feature type="region of interest" description="Disordered" evidence="2">
    <location>
        <begin position="241"/>
        <end position="261"/>
    </location>
</feature>
<feature type="compositionally biased region" description="Basic and acidic residues" evidence="2">
    <location>
        <begin position="241"/>
        <end position="253"/>
    </location>
</feature>
<comment type="function">
    <text evidence="1">Activator for both CDC42 and RAC1 by directly interacting with these Rho GTPases and acting as a guanine nucleotide exchange factor (GEF). This activation results in actin cytoskeleton rearrangements and stimulates membrane ruffling, thus promoting bacterial entry into non-phagocytic cells (By similarity).</text>
</comment>
<comment type="subunit">
    <text evidence="1">Monomer. Interacts with human CDC42 (By similarity).</text>
</comment>
<comment type="subcellular location">
    <subcellularLocation>
        <location evidence="1">Secreted</location>
    </subcellularLocation>
    <text evidence="1">Secreted via the bsa type III secretion system.</text>
</comment>
<comment type="similarity">
    <text evidence="3">Belongs to the GEF (guanine exchange factor) SopE family.</text>
</comment>